<evidence type="ECO:0000255" key="1">
    <source>
        <dbReference type="HAMAP-Rule" id="MF_00821"/>
    </source>
</evidence>
<gene>
    <name evidence="1" type="primary">secB</name>
    <name type="ordered locus">Rsph17029_2898</name>
</gene>
<name>SECB_CERS1</name>
<protein>
    <recommendedName>
        <fullName evidence="1">Protein-export protein SecB</fullName>
    </recommendedName>
</protein>
<accession>A3PNT4</accession>
<dbReference type="EMBL" id="CP000577">
    <property type="protein sequence ID" value="ABN78000.1"/>
    <property type="molecule type" value="Genomic_DNA"/>
</dbReference>
<dbReference type="RefSeq" id="WP_002721743.1">
    <property type="nucleotide sequence ID" value="NC_009049.1"/>
</dbReference>
<dbReference type="SMR" id="A3PNT4"/>
<dbReference type="GeneID" id="67448009"/>
<dbReference type="KEGG" id="rsh:Rsph17029_2898"/>
<dbReference type="HOGENOM" id="CLU_111574_0_0_5"/>
<dbReference type="GO" id="GO:0005737">
    <property type="term" value="C:cytoplasm"/>
    <property type="evidence" value="ECO:0007669"/>
    <property type="project" value="UniProtKB-SubCell"/>
</dbReference>
<dbReference type="GO" id="GO:0051082">
    <property type="term" value="F:unfolded protein binding"/>
    <property type="evidence" value="ECO:0007669"/>
    <property type="project" value="InterPro"/>
</dbReference>
<dbReference type="GO" id="GO:0006457">
    <property type="term" value="P:protein folding"/>
    <property type="evidence" value="ECO:0007669"/>
    <property type="project" value="UniProtKB-UniRule"/>
</dbReference>
<dbReference type="GO" id="GO:0051262">
    <property type="term" value="P:protein tetramerization"/>
    <property type="evidence" value="ECO:0007669"/>
    <property type="project" value="InterPro"/>
</dbReference>
<dbReference type="GO" id="GO:0015031">
    <property type="term" value="P:protein transport"/>
    <property type="evidence" value="ECO:0007669"/>
    <property type="project" value="UniProtKB-UniRule"/>
</dbReference>
<dbReference type="Gene3D" id="3.10.420.10">
    <property type="entry name" value="SecB-like"/>
    <property type="match status" value="1"/>
</dbReference>
<dbReference type="HAMAP" id="MF_00821">
    <property type="entry name" value="SecB"/>
    <property type="match status" value="1"/>
</dbReference>
<dbReference type="InterPro" id="IPR003708">
    <property type="entry name" value="SecB"/>
</dbReference>
<dbReference type="InterPro" id="IPR035958">
    <property type="entry name" value="SecB-like_sf"/>
</dbReference>
<dbReference type="NCBIfam" id="NF004392">
    <property type="entry name" value="PRK05751.1-3"/>
    <property type="match status" value="1"/>
</dbReference>
<dbReference type="NCBIfam" id="TIGR00809">
    <property type="entry name" value="secB"/>
    <property type="match status" value="1"/>
</dbReference>
<dbReference type="PANTHER" id="PTHR36918">
    <property type="match status" value="1"/>
</dbReference>
<dbReference type="PANTHER" id="PTHR36918:SF1">
    <property type="entry name" value="PROTEIN-EXPORT PROTEIN SECB"/>
    <property type="match status" value="1"/>
</dbReference>
<dbReference type="Pfam" id="PF02556">
    <property type="entry name" value="SecB"/>
    <property type="match status" value="1"/>
</dbReference>
<dbReference type="PRINTS" id="PR01594">
    <property type="entry name" value="SECBCHAPRONE"/>
</dbReference>
<dbReference type="SUPFAM" id="SSF54611">
    <property type="entry name" value="SecB-like"/>
    <property type="match status" value="1"/>
</dbReference>
<feature type="chain" id="PRO_1000062508" description="Protein-export protein SecB">
    <location>
        <begin position="1"/>
        <end position="166"/>
    </location>
</feature>
<comment type="function">
    <text evidence="1">One of the proteins required for the normal export of preproteins out of the cell cytoplasm. It is a molecular chaperone that binds to a subset of precursor proteins, maintaining them in a translocation-competent state. It also specifically binds to its receptor SecA.</text>
</comment>
<comment type="subunit">
    <text evidence="1">Homotetramer, a dimer of dimers. One homotetramer interacts with 1 SecA dimer.</text>
</comment>
<comment type="subcellular location">
    <subcellularLocation>
        <location evidence="1">Cytoplasm</location>
    </subcellularLocation>
</comment>
<comment type="similarity">
    <text evidence="1">Belongs to the SecB family.</text>
</comment>
<sequence>MTDANGAPAEAAPQIRMQVLAQYVRDMSFENMVAQKGLQGGDVQPDIQVQVSLDARKRSVEHQYEVITKFKVTSKNKSGSAETLFLLELDYGGIFHVENVPEDQLHPFLLIECPRLLFPFVRRIISDVTRDGGFPPLNVDTVDFLALYRMELARRAEAQKAAQPVQ</sequence>
<reference key="1">
    <citation type="submission" date="2007-02" db="EMBL/GenBank/DDBJ databases">
        <title>Complete sequence of chromosome 1 of Rhodobacter sphaeroides ATCC 17029.</title>
        <authorList>
            <person name="Copeland A."/>
            <person name="Lucas S."/>
            <person name="Lapidus A."/>
            <person name="Barry K."/>
            <person name="Detter J.C."/>
            <person name="Glavina del Rio T."/>
            <person name="Hammon N."/>
            <person name="Israni S."/>
            <person name="Dalin E."/>
            <person name="Tice H."/>
            <person name="Pitluck S."/>
            <person name="Kiss H."/>
            <person name="Brettin T."/>
            <person name="Bruce D."/>
            <person name="Han C."/>
            <person name="Tapia R."/>
            <person name="Gilna P."/>
            <person name="Schmutz J."/>
            <person name="Larimer F."/>
            <person name="Land M."/>
            <person name="Hauser L."/>
            <person name="Kyrpides N."/>
            <person name="Mikhailova N."/>
            <person name="Richardson P."/>
            <person name="Mackenzie C."/>
            <person name="Choudhary M."/>
            <person name="Donohue T.J."/>
            <person name="Kaplan S."/>
        </authorList>
    </citation>
    <scope>NUCLEOTIDE SEQUENCE [LARGE SCALE GENOMIC DNA]</scope>
    <source>
        <strain>ATCC 17029 / ATH 2.4.9</strain>
    </source>
</reference>
<keyword id="KW-0143">Chaperone</keyword>
<keyword id="KW-0963">Cytoplasm</keyword>
<keyword id="KW-0653">Protein transport</keyword>
<keyword id="KW-0811">Translocation</keyword>
<keyword id="KW-0813">Transport</keyword>
<organism>
    <name type="scientific">Cereibacter sphaeroides (strain ATCC 17029 / ATH 2.4.9)</name>
    <name type="common">Rhodobacter sphaeroides</name>
    <dbReference type="NCBI Taxonomy" id="349101"/>
    <lineage>
        <taxon>Bacteria</taxon>
        <taxon>Pseudomonadati</taxon>
        <taxon>Pseudomonadota</taxon>
        <taxon>Alphaproteobacteria</taxon>
        <taxon>Rhodobacterales</taxon>
        <taxon>Paracoccaceae</taxon>
        <taxon>Cereibacter</taxon>
    </lineage>
</organism>
<proteinExistence type="inferred from homology"/>